<protein>
    <recommendedName>
        <fullName evidence="1">3-dehydroquinate synthase</fullName>
        <shortName evidence="1">DHQS</shortName>
        <ecNumber evidence="1">4.2.3.4</ecNumber>
    </recommendedName>
</protein>
<feature type="chain" id="PRO_1000094541" description="3-dehydroquinate synthase">
    <location>
        <begin position="1"/>
        <end position="360"/>
    </location>
</feature>
<feature type="binding site" evidence="1">
    <location>
        <begin position="106"/>
        <end position="110"/>
    </location>
    <ligand>
        <name>NAD(+)</name>
        <dbReference type="ChEBI" id="CHEBI:57540"/>
    </ligand>
</feature>
<feature type="binding site" evidence="1">
    <location>
        <begin position="130"/>
        <end position="131"/>
    </location>
    <ligand>
        <name>NAD(+)</name>
        <dbReference type="ChEBI" id="CHEBI:57540"/>
    </ligand>
</feature>
<feature type="binding site" evidence="1">
    <location>
        <position position="143"/>
    </location>
    <ligand>
        <name>NAD(+)</name>
        <dbReference type="ChEBI" id="CHEBI:57540"/>
    </ligand>
</feature>
<feature type="binding site" evidence="1">
    <location>
        <position position="152"/>
    </location>
    <ligand>
        <name>NAD(+)</name>
        <dbReference type="ChEBI" id="CHEBI:57540"/>
    </ligand>
</feature>
<feature type="binding site" evidence="1">
    <location>
        <position position="185"/>
    </location>
    <ligand>
        <name>Zn(2+)</name>
        <dbReference type="ChEBI" id="CHEBI:29105"/>
    </ligand>
</feature>
<feature type="binding site" evidence="1">
    <location>
        <position position="246"/>
    </location>
    <ligand>
        <name>Zn(2+)</name>
        <dbReference type="ChEBI" id="CHEBI:29105"/>
    </ligand>
</feature>
<feature type="binding site" evidence="1">
    <location>
        <position position="262"/>
    </location>
    <ligand>
        <name>Zn(2+)</name>
        <dbReference type="ChEBI" id="CHEBI:29105"/>
    </ligand>
</feature>
<keyword id="KW-0028">Amino-acid biosynthesis</keyword>
<keyword id="KW-0057">Aromatic amino acid biosynthesis</keyword>
<keyword id="KW-0170">Cobalt</keyword>
<keyword id="KW-0963">Cytoplasm</keyword>
<keyword id="KW-0456">Lyase</keyword>
<keyword id="KW-0479">Metal-binding</keyword>
<keyword id="KW-0520">NAD</keyword>
<keyword id="KW-0547">Nucleotide-binding</keyword>
<keyword id="KW-1185">Reference proteome</keyword>
<keyword id="KW-0862">Zinc</keyword>
<name>AROB_LEUCK</name>
<gene>
    <name evidence="1" type="primary">aroB</name>
    <name type="ordered locus">LCK_00699</name>
</gene>
<reference key="1">
    <citation type="journal article" date="2008" name="J. Bacteriol.">
        <title>Complete genome sequence of Leuconostoc citreum KM20.</title>
        <authorList>
            <person name="Kim J.F."/>
            <person name="Jeong H."/>
            <person name="Lee J.-S."/>
            <person name="Choi S.-H."/>
            <person name="Ha M."/>
            <person name="Hur C.-G."/>
            <person name="Kim J.-S."/>
            <person name="Lee S."/>
            <person name="Park H.-S."/>
            <person name="Park Y.-H."/>
            <person name="Oh T.K."/>
        </authorList>
    </citation>
    <scope>NUCLEOTIDE SEQUENCE [LARGE SCALE GENOMIC DNA]</scope>
    <source>
        <strain>KM20</strain>
    </source>
</reference>
<organism>
    <name type="scientific">Leuconostoc citreum (strain KM20)</name>
    <dbReference type="NCBI Taxonomy" id="349519"/>
    <lineage>
        <taxon>Bacteria</taxon>
        <taxon>Bacillati</taxon>
        <taxon>Bacillota</taxon>
        <taxon>Bacilli</taxon>
        <taxon>Lactobacillales</taxon>
        <taxon>Lactobacillaceae</taxon>
        <taxon>Leuconostoc</taxon>
    </lineage>
</organism>
<comment type="function">
    <text evidence="1">Catalyzes the conversion of 3-deoxy-D-arabino-heptulosonate 7-phosphate (DAHP) to dehydroquinate (DHQ).</text>
</comment>
<comment type="catalytic activity">
    <reaction evidence="1">
        <text>7-phospho-2-dehydro-3-deoxy-D-arabino-heptonate = 3-dehydroquinate + phosphate</text>
        <dbReference type="Rhea" id="RHEA:21968"/>
        <dbReference type="ChEBI" id="CHEBI:32364"/>
        <dbReference type="ChEBI" id="CHEBI:43474"/>
        <dbReference type="ChEBI" id="CHEBI:58394"/>
        <dbReference type="EC" id="4.2.3.4"/>
    </reaction>
</comment>
<comment type="cofactor">
    <cofactor evidence="1">
        <name>Co(2+)</name>
        <dbReference type="ChEBI" id="CHEBI:48828"/>
    </cofactor>
    <cofactor evidence="1">
        <name>Zn(2+)</name>
        <dbReference type="ChEBI" id="CHEBI:29105"/>
    </cofactor>
    <text evidence="1">Binds 1 divalent metal cation per subunit. Can use either Co(2+) or Zn(2+).</text>
</comment>
<comment type="cofactor">
    <cofactor evidence="1">
        <name>NAD(+)</name>
        <dbReference type="ChEBI" id="CHEBI:57540"/>
    </cofactor>
</comment>
<comment type="pathway">
    <text evidence="1">Metabolic intermediate biosynthesis; chorismate biosynthesis; chorismate from D-erythrose 4-phosphate and phosphoenolpyruvate: step 2/7.</text>
</comment>
<comment type="subcellular location">
    <subcellularLocation>
        <location evidence="1">Cytoplasm</location>
    </subcellularLocation>
</comment>
<comment type="similarity">
    <text evidence="1">Belongs to the sugar phosphate cyclases superfamily. Dehydroquinate synthase family.</text>
</comment>
<evidence type="ECO:0000255" key="1">
    <source>
        <dbReference type="HAMAP-Rule" id="MF_00110"/>
    </source>
</evidence>
<sequence length="360" mass="38883">MTVITVSLEKKQYQVKIDRRLHQEIGQAVSLVWTPRRIALLTDSHVGPLYLTAVQQQLEMSGFEVLPLQVPAGESSKSLKTVGELIGKMAEKGFTRDDGLIALGGGVIGDLGGVVASLYMRGIALIQIATSLTAQVDSSVGGKTAINLSHTKNIAGTFYQPDLVLVDPTYLDTLADRDLVEGYAEVVKTSVLAGGSFFDLTGRIYGVTDIRDNAEELSTRAVAYKAQVVMADEKEAGQRQFLNFGHTIGHAIELLAHGELRHGEAVAIGMIAMSSRMTRDGLTPASLTAALRARLETVDLPTTSDLIGTPAFFKHMVNDKKNRGGRLNLVVLKDIGQPMIVQKAIVDMPDFINENEGNNR</sequence>
<accession>B1MYC9</accession>
<proteinExistence type="inferred from homology"/>
<dbReference type="EC" id="4.2.3.4" evidence="1"/>
<dbReference type="EMBL" id="DQ489736">
    <property type="protein sequence ID" value="ACA82531.1"/>
    <property type="molecule type" value="Genomic_DNA"/>
</dbReference>
<dbReference type="RefSeq" id="WP_004899828.1">
    <property type="nucleotide sequence ID" value="NC_010471.1"/>
</dbReference>
<dbReference type="SMR" id="B1MYC9"/>
<dbReference type="STRING" id="349519.LCK_00699"/>
<dbReference type="KEGG" id="lci:LCK_00699"/>
<dbReference type="eggNOG" id="COG0337">
    <property type="taxonomic scope" value="Bacteria"/>
</dbReference>
<dbReference type="HOGENOM" id="CLU_001201_0_1_9"/>
<dbReference type="OrthoDB" id="9806583at2"/>
<dbReference type="UniPathway" id="UPA00053">
    <property type="reaction ID" value="UER00085"/>
</dbReference>
<dbReference type="Proteomes" id="UP000002166">
    <property type="component" value="Chromosome"/>
</dbReference>
<dbReference type="GO" id="GO:0005737">
    <property type="term" value="C:cytoplasm"/>
    <property type="evidence" value="ECO:0007669"/>
    <property type="project" value="UniProtKB-SubCell"/>
</dbReference>
<dbReference type="GO" id="GO:0003856">
    <property type="term" value="F:3-dehydroquinate synthase activity"/>
    <property type="evidence" value="ECO:0007669"/>
    <property type="project" value="UniProtKB-UniRule"/>
</dbReference>
<dbReference type="GO" id="GO:0046872">
    <property type="term" value="F:metal ion binding"/>
    <property type="evidence" value="ECO:0007669"/>
    <property type="project" value="UniProtKB-KW"/>
</dbReference>
<dbReference type="GO" id="GO:0000166">
    <property type="term" value="F:nucleotide binding"/>
    <property type="evidence" value="ECO:0007669"/>
    <property type="project" value="UniProtKB-KW"/>
</dbReference>
<dbReference type="GO" id="GO:0008652">
    <property type="term" value="P:amino acid biosynthetic process"/>
    <property type="evidence" value="ECO:0007669"/>
    <property type="project" value="UniProtKB-KW"/>
</dbReference>
<dbReference type="GO" id="GO:0009073">
    <property type="term" value="P:aromatic amino acid family biosynthetic process"/>
    <property type="evidence" value="ECO:0007669"/>
    <property type="project" value="UniProtKB-KW"/>
</dbReference>
<dbReference type="GO" id="GO:0009423">
    <property type="term" value="P:chorismate biosynthetic process"/>
    <property type="evidence" value="ECO:0007669"/>
    <property type="project" value="UniProtKB-UniRule"/>
</dbReference>
<dbReference type="CDD" id="cd08195">
    <property type="entry name" value="DHQS"/>
    <property type="match status" value="1"/>
</dbReference>
<dbReference type="FunFam" id="3.40.50.1970:FF:000007">
    <property type="entry name" value="Pentafunctional AROM polypeptide"/>
    <property type="match status" value="1"/>
</dbReference>
<dbReference type="Gene3D" id="3.40.50.1970">
    <property type="match status" value="1"/>
</dbReference>
<dbReference type="Gene3D" id="1.20.1090.10">
    <property type="entry name" value="Dehydroquinate synthase-like - alpha domain"/>
    <property type="match status" value="1"/>
</dbReference>
<dbReference type="HAMAP" id="MF_00110">
    <property type="entry name" value="DHQ_synthase"/>
    <property type="match status" value="1"/>
</dbReference>
<dbReference type="InterPro" id="IPR050071">
    <property type="entry name" value="Dehydroquinate_synthase"/>
</dbReference>
<dbReference type="InterPro" id="IPR016037">
    <property type="entry name" value="DHQ_synth_AroB"/>
</dbReference>
<dbReference type="InterPro" id="IPR030963">
    <property type="entry name" value="DHQ_synth_fam"/>
</dbReference>
<dbReference type="InterPro" id="IPR030960">
    <property type="entry name" value="DHQS/DOIS_N"/>
</dbReference>
<dbReference type="InterPro" id="IPR056179">
    <property type="entry name" value="DHQS_C"/>
</dbReference>
<dbReference type="NCBIfam" id="TIGR01357">
    <property type="entry name" value="aroB"/>
    <property type="match status" value="1"/>
</dbReference>
<dbReference type="PANTHER" id="PTHR43622">
    <property type="entry name" value="3-DEHYDROQUINATE SYNTHASE"/>
    <property type="match status" value="1"/>
</dbReference>
<dbReference type="PANTHER" id="PTHR43622:SF7">
    <property type="entry name" value="3-DEHYDROQUINATE SYNTHASE, CHLOROPLASTIC"/>
    <property type="match status" value="1"/>
</dbReference>
<dbReference type="Pfam" id="PF01761">
    <property type="entry name" value="DHQ_synthase"/>
    <property type="match status" value="1"/>
</dbReference>
<dbReference type="Pfam" id="PF24621">
    <property type="entry name" value="DHQS_C"/>
    <property type="match status" value="1"/>
</dbReference>
<dbReference type="PIRSF" id="PIRSF001455">
    <property type="entry name" value="DHQ_synth"/>
    <property type="match status" value="1"/>
</dbReference>
<dbReference type="SUPFAM" id="SSF56796">
    <property type="entry name" value="Dehydroquinate synthase-like"/>
    <property type="match status" value="1"/>
</dbReference>